<comment type="function">
    <text evidence="5">Fatty acid desaturase that introduces a cis double bond at the 4-position in 16-carbon polyunsaturated fatty acids that contain a Delta(7) double bond, resulting in the production of 16 carbon fatty acid (7Z,10Z,13Z)-hexadeca-7,10,13-trienoate.</text>
</comment>
<comment type="catalytic activity">
    <reaction evidence="8">
        <text>a (7Z,10Z,13Z,16Z,19Z)-docosapentaenoyl-containing glycerolipid + 2 Fe(II)-[cytochrome b5] + O2 + 2 H(+) = a (4Z,7Z,10Z,13Z,16Z,19Z)-docosahexaenoyl-containing glycerolipid + 2 Fe(III)-[cytochrome b5] + 2 H2O</text>
        <dbReference type="Rhea" id="RHEA:46252"/>
        <dbReference type="Rhea" id="RHEA-COMP:10438"/>
        <dbReference type="Rhea" id="RHEA-COMP:10439"/>
        <dbReference type="ChEBI" id="CHEBI:15377"/>
        <dbReference type="ChEBI" id="CHEBI:15378"/>
        <dbReference type="ChEBI" id="CHEBI:15379"/>
        <dbReference type="ChEBI" id="CHEBI:29033"/>
        <dbReference type="ChEBI" id="CHEBI:29034"/>
        <dbReference type="ChEBI" id="CHEBI:88266"/>
        <dbReference type="ChEBI" id="CHEBI:88267"/>
        <dbReference type="EC" id="1.14.19.31"/>
    </reaction>
</comment>
<comment type="catalytic activity">
    <reaction evidence="8">
        <text>a (7Z,10Z,13Z,16Z)-docosatetraenoyl-containing glycerolipid + 2 Fe(II)-[cytochrome b5] + O2 + 2 H(+) = a (4Z,7Z,10Z,13Z,16Z)-docosapentaenoyl-containing glycerolipid + 2 Fe(III)-[cytochrome b5] + 2 H2O</text>
        <dbReference type="Rhea" id="RHEA:46256"/>
        <dbReference type="Rhea" id="RHEA-COMP:10438"/>
        <dbReference type="Rhea" id="RHEA-COMP:10439"/>
        <dbReference type="ChEBI" id="CHEBI:15377"/>
        <dbReference type="ChEBI" id="CHEBI:15378"/>
        <dbReference type="ChEBI" id="CHEBI:15379"/>
        <dbReference type="ChEBI" id="CHEBI:29033"/>
        <dbReference type="ChEBI" id="CHEBI:29034"/>
        <dbReference type="ChEBI" id="CHEBI:88264"/>
        <dbReference type="ChEBI" id="CHEBI:88265"/>
        <dbReference type="EC" id="1.14.19.31"/>
    </reaction>
</comment>
<comment type="cofactor">
    <cofactor evidence="1">
        <name>Fe(2+)</name>
        <dbReference type="ChEBI" id="CHEBI:29033"/>
    </cofactor>
</comment>
<comment type="subcellular location">
    <subcellularLocation>
        <location evidence="8">Plastid</location>
        <location evidence="8">Chloroplast membrane</location>
        <topology evidence="2">Multi-pass membrane protein</topology>
    </subcellularLocation>
</comment>
<comment type="domain">
    <text evidence="8">The cytochrome b5 heme-binding domain acts as the direct electron donor to the active site of the desaturase, and does not require an external cytochrome.</text>
</comment>
<comment type="similarity">
    <text evidence="7">Belongs to the fatty acid desaturase type 1 family.</text>
</comment>
<comment type="sequence caution" evidence="7">
    <conflict type="erroneous gene model prediction">
        <sequence resource="EMBL-CDS" id="EDP09855"/>
    </conflict>
</comment>
<proteinExistence type="evidence at protein level"/>
<feature type="transit peptide" description="Chloroplast" evidence="2">
    <location>
        <begin position="1"/>
        <end position="47"/>
    </location>
</feature>
<feature type="chain" id="PRO_0000434758" description="Acyl-lipid (7-3)-desaturase, chloroplastic" evidence="2">
    <location>
        <begin position="48"/>
        <end position="516"/>
    </location>
</feature>
<feature type="transmembrane region" description="Helical" evidence="2">
    <location>
        <begin position="186"/>
        <end position="206"/>
    </location>
</feature>
<feature type="transmembrane region" description="Helical" evidence="2">
    <location>
        <begin position="209"/>
        <end position="229"/>
    </location>
</feature>
<feature type="transmembrane region" description="Helical" evidence="2">
    <location>
        <begin position="305"/>
        <end position="325"/>
    </location>
</feature>
<feature type="transmembrane region" description="Helical" evidence="2">
    <location>
        <begin position="354"/>
        <end position="374"/>
    </location>
</feature>
<feature type="transmembrane region" description="Helical" evidence="2">
    <location>
        <begin position="375"/>
        <end position="395"/>
    </location>
</feature>
<feature type="transmembrane region" description="Helical" evidence="2">
    <location>
        <begin position="423"/>
        <end position="443"/>
    </location>
</feature>
<feature type="domain" description="Cytochrome b5 heme-binding" evidence="3">
    <location>
        <begin position="83"/>
        <end position="148"/>
    </location>
</feature>
<feature type="region of interest" description="Disordered" evidence="4">
    <location>
        <begin position="1"/>
        <end position="25"/>
    </location>
</feature>
<feature type="short sequence motif" description="Histidine box-1" evidence="7">
    <location>
        <begin position="227"/>
        <end position="231"/>
    </location>
</feature>
<feature type="short sequence motif" description="Histidine box-2" evidence="7">
    <location>
        <begin position="262"/>
        <end position="267"/>
    </location>
</feature>
<feature type="short sequence motif" description="Histidine box-3" evidence="7">
    <location>
        <begin position="444"/>
        <end position="448"/>
    </location>
</feature>
<feature type="binding site" description="axial binding residue" evidence="3">
    <location>
        <position position="100"/>
    </location>
    <ligand>
        <name>heme</name>
        <dbReference type="ChEBI" id="CHEBI:30413"/>
    </ligand>
    <ligandPart>
        <name>Fe</name>
        <dbReference type="ChEBI" id="CHEBI:18248"/>
    </ligandPart>
</feature>
<feature type="binding site" description="axial binding residue" evidence="3">
    <location>
        <position position="123"/>
    </location>
    <ligand>
        <name>heme</name>
        <dbReference type="ChEBI" id="CHEBI:30413"/>
    </ligand>
    <ligandPart>
        <name>Fe</name>
        <dbReference type="ChEBI" id="CHEBI:18248"/>
    </ligandPart>
</feature>
<protein>
    <recommendedName>
        <fullName evidence="7">Acyl-lipid (7-3)-desaturase, chloroplastic</fullName>
        <ecNumber evidence="8">1.14.19.31</ecNumber>
    </recommendedName>
    <alternativeName>
        <fullName evidence="7">Acyl-lipid 4-desaturase</fullName>
    </alternativeName>
    <alternativeName>
        <fullName evidence="6">Fatty acyl delta4 desaturase</fullName>
    </alternativeName>
</protein>
<dbReference type="EC" id="1.14.19.31" evidence="8"/>
<dbReference type="EMBL" id="JN089704">
    <property type="protein sequence ID" value="AFJ74144.1"/>
    <property type="molecule type" value="Genomic_DNA"/>
</dbReference>
<dbReference type="EMBL" id="DS496108">
    <property type="protein sequence ID" value="EDP09855.1"/>
    <property type="status" value="ALT_SEQ"/>
    <property type="molecule type" value="Genomic_DNA"/>
</dbReference>
<dbReference type="RefSeq" id="XP_001690117.1">
    <property type="nucleotide sequence ID" value="XM_001690065.1"/>
</dbReference>
<dbReference type="SMR" id="I2CYZ4"/>
<dbReference type="PaxDb" id="3055-EDP09855"/>
<dbReference type="EnsemblPlants" id="PNW88628">
    <property type="protein sequence ID" value="PNW88628"/>
    <property type="gene ID" value="CHLRE_01g037700v5"/>
</dbReference>
<dbReference type="GeneID" id="5715503"/>
<dbReference type="Gramene" id="PNW88628">
    <property type="protein sequence ID" value="PNW88628"/>
    <property type="gene ID" value="CHLRE_01g037700v5"/>
</dbReference>
<dbReference type="KEGG" id="ag:AFJ74144"/>
<dbReference type="KEGG" id="cre:CHLRE_01g037700v5"/>
<dbReference type="eggNOG" id="KOG4232">
    <property type="taxonomic scope" value="Eukaryota"/>
</dbReference>
<dbReference type="OMA" id="HHIHCND"/>
<dbReference type="OrthoDB" id="260091at2759"/>
<dbReference type="BioCyc" id="CHLAMY:MONOMERIO2-8"/>
<dbReference type="BRENDA" id="1.14.19.31">
    <property type="organism ID" value="1318"/>
</dbReference>
<dbReference type="GO" id="GO:0009507">
    <property type="term" value="C:chloroplast"/>
    <property type="evidence" value="ECO:0000314"/>
    <property type="project" value="UniProtKB"/>
</dbReference>
<dbReference type="GO" id="GO:0031969">
    <property type="term" value="C:chloroplast membrane"/>
    <property type="evidence" value="ECO:0007669"/>
    <property type="project" value="UniProtKB-SubCell"/>
</dbReference>
<dbReference type="GO" id="GO:0020037">
    <property type="term" value="F:heme binding"/>
    <property type="evidence" value="ECO:0007669"/>
    <property type="project" value="InterPro"/>
</dbReference>
<dbReference type="GO" id="GO:0046872">
    <property type="term" value="F:metal ion binding"/>
    <property type="evidence" value="ECO:0007669"/>
    <property type="project" value="UniProtKB-KW"/>
</dbReference>
<dbReference type="GO" id="GO:0016717">
    <property type="term" value="F:oxidoreductase activity, acting on paired donors, with oxidation of a pair of donors resulting in the reduction of molecular oxygen to two molecules of water"/>
    <property type="evidence" value="ECO:0000314"/>
    <property type="project" value="UniProtKB"/>
</dbReference>
<dbReference type="GO" id="GO:0042759">
    <property type="term" value="P:long-chain fatty acid biosynthetic process"/>
    <property type="evidence" value="ECO:0000314"/>
    <property type="project" value="UniProtKB"/>
</dbReference>
<dbReference type="GO" id="GO:0006636">
    <property type="term" value="P:unsaturated fatty acid biosynthetic process"/>
    <property type="evidence" value="ECO:0000314"/>
    <property type="project" value="UniProtKB"/>
</dbReference>
<dbReference type="CDD" id="cd03506">
    <property type="entry name" value="Delta6-FADS-like"/>
    <property type="match status" value="1"/>
</dbReference>
<dbReference type="FunFam" id="3.10.120.10:FF:000031">
    <property type="entry name" value="Acyl-lipid (8-3)-desaturase"/>
    <property type="match status" value="1"/>
</dbReference>
<dbReference type="Gene3D" id="3.10.120.10">
    <property type="entry name" value="Cytochrome b5-like heme/steroid binding domain"/>
    <property type="match status" value="1"/>
</dbReference>
<dbReference type="InterPro" id="IPR001199">
    <property type="entry name" value="Cyt_B5-like_heme/steroid-bd"/>
</dbReference>
<dbReference type="InterPro" id="IPR036400">
    <property type="entry name" value="Cyt_B5-like_heme/steroid_sf"/>
</dbReference>
<dbReference type="InterPro" id="IPR018506">
    <property type="entry name" value="Cyt_B5_heme-BS"/>
</dbReference>
<dbReference type="InterPro" id="IPR005804">
    <property type="entry name" value="FA_desaturase_dom"/>
</dbReference>
<dbReference type="InterPro" id="IPR012171">
    <property type="entry name" value="Fatty_acid_desaturase"/>
</dbReference>
<dbReference type="PANTHER" id="PTHR19353:SF19">
    <property type="entry name" value="DELTA(5) FATTY ACID DESATURASE C-RELATED"/>
    <property type="match status" value="1"/>
</dbReference>
<dbReference type="PANTHER" id="PTHR19353">
    <property type="entry name" value="FATTY ACID DESATURASE 2"/>
    <property type="match status" value="1"/>
</dbReference>
<dbReference type="Pfam" id="PF00173">
    <property type="entry name" value="Cyt-b5"/>
    <property type="match status" value="1"/>
</dbReference>
<dbReference type="Pfam" id="PF00487">
    <property type="entry name" value="FA_desaturase"/>
    <property type="match status" value="1"/>
</dbReference>
<dbReference type="PIRSF" id="PIRSF015921">
    <property type="entry name" value="FA_sphinglp_des"/>
    <property type="match status" value="1"/>
</dbReference>
<dbReference type="SMART" id="SM01117">
    <property type="entry name" value="Cyt-b5"/>
    <property type="match status" value="1"/>
</dbReference>
<dbReference type="SUPFAM" id="SSF55856">
    <property type="entry name" value="Cytochrome b5-like heme/steroid binding domain"/>
    <property type="match status" value="1"/>
</dbReference>
<dbReference type="PROSITE" id="PS00191">
    <property type="entry name" value="CYTOCHROME_B5_1"/>
    <property type="match status" value="1"/>
</dbReference>
<dbReference type="PROSITE" id="PS50255">
    <property type="entry name" value="CYTOCHROME_B5_2"/>
    <property type="match status" value="1"/>
</dbReference>
<name>D4FAD_CHLRE</name>
<sequence>MNATMQRSAVAGRTSGKVATTARASSMARPRLPIAGRVARRSAVTVRAVAEPVVVDKAVEAPAKPVPSGGDPWEDEKWTKYKWTVYRGVAYDLTPYLDRHPGGRWLLNLAIGRDATALFESYHLRPEVAASMLKRLPVLADFPVDAVPPSPRPNDSELYNAIRERVRKEVFKGTEIKGAHRSGSEGAAFAVLGYAAAMYALYTYDANPLTGALLGLGGAWIGLTIQHCGNHGAMSTNPVVNNLMGLTNDLAGGSSLMWRYHHQVSHHIHCNDDALDEDVFSAFPMLRFDDRLPKAWYHQFQHVYMWALFPFLQLVFQIGDWQALLTNRTVGATLYGASNFERQTLIAGKLAHYFLLYGLPAFLHGPTAMLGGAAGYLFTQSIVLAATFAVSHNVPETKPLDPGPTRENLDESAVTRDWGVQQVLTSANWGGVIGNFFTGGLNLQIEHHLFPAISFMHYPAISKIVADECKQRGIPYSHYDTLPEILGRFVRYMKEVGAAPQKPVKRDGEMLMLSKF</sequence>
<accession>I2CYZ4</accession>
<accession>A8HMA4</accession>
<organism>
    <name type="scientific">Chlamydomonas reinhardtii</name>
    <name type="common">Chlamydomonas smithii</name>
    <dbReference type="NCBI Taxonomy" id="3055"/>
    <lineage>
        <taxon>Eukaryota</taxon>
        <taxon>Viridiplantae</taxon>
        <taxon>Chlorophyta</taxon>
        <taxon>core chlorophytes</taxon>
        <taxon>Chlorophyceae</taxon>
        <taxon>CS clade</taxon>
        <taxon>Chlamydomonadales</taxon>
        <taxon>Chlamydomonadaceae</taxon>
        <taxon>Chlamydomonas</taxon>
    </lineage>
</organism>
<reference key="1">
    <citation type="journal article" date="2012" name="Eukaryot. Cell">
        <title>A cytochrome b5-containing plastid-located fatty acid desaturase from Chlamydomonas reinhardtii.</title>
        <authorList>
            <person name="Zaeuner S."/>
            <person name="Jochum W."/>
            <person name="Bigorowski T."/>
            <person name="Benning C."/>
        </authorList>
    </citation>
    <scope>NUCLEOTIDE SEQUENCE [GENOMIC DNA]</scope>
    <scope>FUNCTION</scope>
    <scope>CATALYTIC ACTIVITY</scope>
    <scope>SUBCELLULAR LOCATION</scope>
    <source>
        <strain evidence="9">Dw15-1</strain>
    </source>
</reference>
<reference key="2">
    <citation type="journal article" date="2007" name="Science">
        <title>The Chlamydomonas genome reveals the evolution of key animal and plant functions.</title>
        <authorList>
            <person name="Merchant S.S."/>
            <person name="Prochnik S.E."/>
            <person name="Vallon O."/>
            <person name="Harris E.H."/>
            <person name="Karpowicz S.J."/>
            <person name="Witman G.B."/>
            <person name="Terry A."/>
            <person name="Salamov A."/>
            <person name="Fritz-Laylin L.K."/>
            <person name="Marechal-Drouard L."/>
            <person name="Marshall W.F."/>
            <person name="Qu L.H."/>
            <person name="Nelson D.R."/>
            <person name="Sanderfoot A.A."/>
            <person name="Spalding M.H."/>
            <person name="Kapitonov V.V."/>
            <person name="Ren Q."/>
            <person name="Ferris P."/>
            <person name="Lindquist E."/>
            <person name="Shapiro H."/>
            <person name="Lucas S.M."/>
            <person name="Grimwood J."/>
            <person name="Schmutz J."/>
            <person name="Cardol P."/>
            <person name="Cerutti H."/>
            <person name="Chanfreau G."/>
            <person name="Chen C.L."/>
            <person name="Cognat V."/>
            <person name="Croft M.T."/>
            <person name="Dent R."/>
            <person name="Dutcher S."/>
            <person name="Fernandez E."/>
            <person name="Fukuzawa H."/>
            <person name="Gonzalez-Ballester D."/>
            <person name="Gonzalez-Halphen D."/>
            <person name="Hallmann A."/>
            <person name="Hanikenne M."/>
            <person name="Hippler M."/>
            <person name="Inwood W."/>
            <person name="Jabbari K."/>
            <person name="Kalanon M."/>
            <person name="Kuras R."/>
            <person name="Lefebvre P.A."/>
            <person name="Lemaire S.D."/>
            <person name="Lobanov A.V."/>
            <person name="Lohr M."/>
            <person name="Manuell A."/>
            <person name="Meier I."/>
            <person name="Mets L."/>
            <person name="Mittag M."/>
            <person name="Mittelmeier T."/>
            <person name="Moroney J.V."/>
            <person name="Moseley J."/>
            <person name="Napoli C."/>
            <person name="Nedelcu A.M."/>
            <person name="Niyogi K."/>
            <person name="Novoselov S.V."/>
            <person name="Paulsen I.T."/>
            <person name="Pazour G.J."/>
            <person name="Purton S."/>
            <person name="Ral J.P."/>
            <person name="Riano-Pachon D.M."/>
            <person name="Riekhof W."/>
            <person name="Rymarquis L."/>
            <person name="Schroda M."/>
            <person name="Stern D."/>
            <person name="Umen J."/>
            <person name="Willows R."/>
            <person name="Wilson N."/>
            <person name="Zimmer S.L."/>
            <person name="Allmer J."/>
            <person name="Balk J."/>
            <person name="Bisova K."/>
            <person name="Chen C.J."/>
            <person name="Elias M."/>
            <person name="Gendler K."/>
            <person name="Hauser C."/>
            <person name="Lamb M.R."/>
            <person name="Ledford H."/>
            <person name="Long J.C."/>
            <person name="Minagawa J."/>
            <person name="Page M.D."/>
            <person name="Pan J."/>
            <person name="Pootakham W."/>
            <person name="Roje S."/>
            <person name="Rose A."/>
            <person name="Stahlberg E."/>
            <person name="Terauchi A.M."/>
            <person name="Yang P."/>
            <person name="Ball S."/>
            <person name="Bowler C."/>
            <person name="Dieckmann C.L."/>
            <person name="Gladyshev V.N."/>
            <person name="Green P."/>
            <person name="Jorgensen R."/>
            <person name="Mayfield S."/>
            <person name="Mueller-Roeber B."/>
            <person name="Rajamani S."/>
            <person name="Sayre R.T."/>
            <person name="Brokstein P."/>
            <person name="Dubchak I."/>
            <person name="Goodstein D."/>
            <person name="Hornick L."/>
            <person name="Huang Y.W."/>
            <person name="Jhaveri J."/>
            <person name="Luo Y."/>
            <person name="Martinez D."/>
            <person name="Ngau W.C."/>
            <person name="Otillar B."/>
            <person name="Poliakov A."/>
            <person name="Porter A."/>
            <person name="Szajkowski L."/>
            <person name="Werner G."/>
            <person name="Zhou K."/>
            <person name="Grigoriev I.V."/>
            <person name="Rokhsar D.S."/>
            <person name="Grossman A.R."/>
        </authorList>
    </citation>
    <scope>NUCLEOTIDE SEQUENCE [LARGE SCALE GENOMIC DNA]</scope>
    <source>
        <strain>CC-503</strain>
    </source>
</reference>
<evidence type="ECO:0000250" key="1">
    <source>
        <dbReference type="UniProtKB" id="O00767"/>
    </source>
</evidence>
<evidence type="ECO:0000255" key="2"/>
<evidence type="ECO:0000255" key="3">
    <source>
        <dbReference type="PROSITE-ProRule" id="PRU00279"/>
    </source>
</evidence>
<evidence type="ECO:0000256" key="4">
    <source>
        <dbReference type="SAM" id="MobiDB-lite"/>
    </source>
</evidence>
<evidence type="ECO:0000269" key="5">
    <source>
    </source>
</evidence>
<evidence type="ECO:0000303" key="6">
    <source>
    </source>
</evidence>
<evidence type="ECO:0000305" key="7"/>
<evidence type="ECO:0000305" key="8">
    <source>
    </source>
</evidence>
<evidence type="ECO:0000312" key="9">
    <source>
        <dbReference type="EMBL" id="AFJ74144.1"/>
    </source>
</evidence>
<gene>
    <name evidence="9" type="ORF">CHLREDRAFT_32523</name>
</gene>
<keyword id="KW-0150">Chloroplast</keyword>
<keyword id="KW-0249">Electron transport</keyword>
<keyword id="KW-0275">Fatty acid biosynthesis</keyword>
<keyword id="KW-0276">Fatty acid metabolism</keyword>
<keyword id="KW-0349">Heme</keyword>
<keyword id="KW-0408">Iron</keyword>
<keyword id="KW-0444">Lipid biosynthesis</keyword>
<keyword id="KW-0443">Lipid metabolism</keyword>
<keyword id="KW-0472">Membrane</keyword>
<keyword id="KW-0479">Metal-binding</keyword>
<keyword id="KW-0560">Oxidoreductase</keyword>
<keyword id="KW-0934">Plastid</keyword>
<keyword id="KW-0809">Transit peptide</keyword>
<keyword id="KW-0812">Transmembrane</keyword>
<keyword id="KW-1133">Transmembrane helix</keyword>
<keyword id="KW-0813">Transport</keyword>